<accession>Q7A1S4</accession>
<proteinExistence type="evidence at protein level"/>
<feature type="chain" id="PRO_0000181597" description="Large ribosomal subunit protein bL25">
    <location>
        <begin position="1"/>
        <end position="217"/>
    </location>
</feature>
<feature type="region of interest" description="Disordered" evidence="2">
    <location>
        <begin position="178"/>
        <end position="217"/>
    </location>
</feature>
<feature type="compositionally biased region" description="Acidic residues" evidence="2">
    <location>
        <begin position="184"/>
        <end position="205"/>
    </location>
</feature>
<feature type="compositionally biased region" description="Basic and acidic residues" evidence="2">
    <location>
        <begin position="206"/>
        <end position="217"/>
    </location>
</feature>
<sequence>MASLKSIIRQGKQTRSDLKQLRKSGKVPAVVYGYGTKNVSVKVDEVEFIKVIREVGRNGVIELGVGSKTIKVMVADYQFDPLKNQITHIDFLAINMSEERTVEVPVQLVGEAVGAKEGGVVEQPLFNLEVTATPDNIPEAIEVDITELNINDSLTVADVKVTGDFKIENDSAESVVTVVAPTEEPTEEEIEAMEGEQQTEEPEVVGESKEDEEKTEE</sequence>
<gene>
    <name evidence="1" type="primary">rplY</name>
    <name evidence="1" type="synonym">ctc</name>
    <name type="ordered locus">MW0456</name>
</gene>
<evidence type="ECO:0000255" key="1">
    <source>
        <dbReference type="HAMAP-Rule" id="MF_01334"/>
    </source>
</evidence>
<evidence type="ECO:0000256" key="2">
    <source>
        <dbReference type="SAM" id="MobiDB-lite"/>
    </source>
</evidence>
<evidence type="ECO:0000305" key="3"/>
<organism>
    <name type="scientific">Staphylococcus aureus (strain MW2)</name>
    <dbReference type="NCBI Taxonomy" id="196620"/>
    <lineage>
        <taxon>Bacteria</taxon>
        <taxon>Bacillati</taxon>
        <taxon>Bacillota</taxon>
        <taxon>Bacilli</taxon>
        <taxon>Bacillales</taxon>
        <taxon>Staphylococcaceae</taxon>
        <taxon>Staphylococcus</taxon>
    </lineage>
</organism>
<reference key="1">
    <citation type="journal article" date="2002" name="Lancet">
        <title>Genome and virulence determinants of high virulence community-acquired MRSA.</title>
        <authorList>
            <person name="Baba T."/>
            <person name="Takeuchi F."/>
            <person name="Kuroda M."/>
            <person name="Yuzawa H."/>
            <person name="Aoki K."/>
            <person name="Oguchi A."/>
            <person name="Nagai Y."/>
            <person name="Iwama N."/>
            <person name="Asano K."/>
            <person name="Naimi T."/>
            <person name="Kuroda H."/>
            <person name="Cui L."/>
            <person name="Yamamoto K."/>
            <person name="Hiramatsu K."/>
        </authorList>
    </citation>
    <scope>NUCLEOTIDE SEQUENCE [LARGE SCALE GENOMIC DNA]</scope>
    <source>
        <strain>MW2</strain>
    </source>
</reference>
<protein>
    <recommendedName>
        <fullName evidence="1">Large ribosomal subunit protein bL25</fullName>
    </recommendedName>
    <alternativeName>
        <fullName evidence="3">50S ribosomal protein L25</fullName>
    </alternativeName>
    <alternativeName>
        <fullName evidence="1">General stress protein CTC</fullName>
    </alternativeName>
</protein>
<name>RL25_STAAW</name>
<comment type="function">
    <text evidence="1">This is one of the proteins that binds to the 5S RNA in the ribosome where it forms part of the central protuberance.</text>
</comment>
<comment type="subunit">
    <text evidence="1">Part of the 50S ribosomal subunit; part of the 5S rRNA/L5/L18/L25 subcomplex. Contacts the 5S rRNA. Binds to the 5S rRNA independently of L5 and L18.</text>
</comment>
<comment type="similarity">
    <text evidence="1">Belongs to the bacterial ribosomal protein bL25 family. CTC subfamily.</text>
</comment>
<dbReference type="EMBL" id="BA000033">
    <property type="protein sequence ID" value="BAB94321.1"/>
    <property type="molecule type" value="Genomic_DNA"/>
</dbReference>
<dbReference type="RefSeq" id="WP_000157650.1">
    <property type="nucleotide sequence ID" value="NC_003923.1"/>
</dbReference>
<dbReference type="PDB" id="8Y36">
    <property type="method" value="EM"/>
    <property type="resolution" value="2.65 A"/>
    <property type="chains" value="T=2-95"/>
</dbReference>
<dbReference type="PDB" id="8Y37">
    <property type="method" value="EM"/>
    <property type="resolution" value="2.53 A"/>
    <property type="chains" value="T=2-95"/>
</dbReference>
<dbReference type="PDB" id="8Y38">
    <property type="method" value="EM"/>
    <property type="resolution" value="2.58 A"/>
    <property type="chains" value="T=2-95"/>
</dbReference>
<dbReference type="PDB" id="8Y39">
    <property type="method" value="EM"/>
    <property type="resolution" value="3.60 A"/>
    <property type="chains" value="T=2-95"/>
</dbReference>
<dbReference type="PDBsum" id="8Y36"/>
<dbReference type="PDBsum" id="8Y37"/>
<dbReference type="PDBsum" id="8Y38"/>
<dbReference type="PDBsum" id="8Y39"/>
<dbReference type="EMDB" id="EMD-38873"/>
<dbReference type="EMDB" id="EMD-38874"/>
<dbReference type="EMDB" id="EMD-38875"/>
<dbReference type="EMDB" id="EMD-38876"/>
<dbReference type="SMR" id="Q7A1S4"/>
<dbReference type="KEGG" id="sam:MW0456"/>
<dbReference type="HOGENOM" id="CLU_075939_2_1_9"/>
<dbReference type="GO" id="GO:0022625">
    <property type="term" value="C:cytosolic large ribosomal subunit"/>
    <property type="evidence" value="ECO:0007669"/>
    <property type="project" value="TreeGrafter"/>
</dbReference>
<dbReference type="GO" id="GO:0008097">
    <property type="term" value="F:5S rRNA binding"/>
    <property type="evidence" value="ECO:0007669"/>
    <property type="project" value="InterPro"/>
</dbReference>
<dbReference type="GO" id="GO:0003735">
    <property type="term" value="F:structural constituent of ribosome"/>
    <property type="evidence" value="ECO:0007669"/>
    <property type="project" value="InterPro"/>
</dbReference>
<dbReference type="GO" id="GO:0006412">
    <property type="term" value="P:translation"/>
    <property type="evidence" value="ECO:0007669"/>
    <property type="project" value="UniProtKB-UniRule"/>
</dbReference>
<dbReference type="CDD" id="cd00495">
    <property type="entry name" value="Ribosomal_L25_TL5_CTC"/>
    <property type="match status" value="1"/>
</dbReference>
<dbReference type="FunFam" id="2.40.240.10:FF:000013">
    <property type="entry name" value="50S ribosomal protein L25"/>
    <property type="match status" value="1"/>
</dbReference>
<dbReference type="Gene3D" id="2.170.120.20">
    <property type="entry name" value="Ribosomal protein L25, beta domain"/>
    <property type="match status" value="1"/>
</dbReference>
<dbReference type="Gene3D" id="2.40.240.10">
    <property type="entry name" value="Ribosomal Protein L25, Chain P"/>
    <property type="match status" value="1"/>
</dbReference>
<dbReference type="HAMAP" id="MF_01334">
    <property type="entry name" value="Ribosomal_bL25_CTC"/>
    <property type="match status" value="1"/>
</dbReference>
<dbReference type="InterPro" id="IPR020056">
    <property type="entry name" value="Rbsml_bL25/Gln-tRNA_synth_N"/>
</dbReference>
<dbReference type="InterPro" id="IPR011035">
    <property type="entry name" value="Ribosomal_bL25/Gln-tRNA_synth"/>
</dbReference>
<dbReference type="InterPro" id="IPR020057">
    <property type="entry name" value="Ribosomal_bL25_b-dom"/>
</dbReference>
<dbReference type="InterPro" id="IPR037121">
    <property type="entry name" value="Ribosomal_bL25_C"/>
</dbReference>
<dbReference type="InterPro" id="IPR001021">
    <property type="entry name" value="Ribosomal_bL25_long"/>
</dbReference>
<dbReference type="InterPro" id="IPR029751">
    <property type="entry name" value="Ribosomal_L25_dom"/>
</dbReference>
<dbReference type="InterPro" id="IPR020930">
    <property type="entry name" value="Ribosomal_uL5_bac-type"/>
</dbReference>
<dbReference type="NCBIfam" id="TIGR00731">
    <property type="entry name" value="bL25_bact_ctc"/>
    <property type="match status" value="1"/>
</dbReference>
<dbReference type="NCBIfam" id="NF004133">
    <property type="entry name" value="PRK05618.2-4"/>
    <property type="match status" value="1"/>
</dbReference>
<dbReference type="NCBIfam" id="NF004134">
    <property type="entry name" value="PRK05618.2-5"/>
    <property type="match status" value="1"/>
</dbReference>
<dbReference type="PANTHER" id="PTHR33284">
    <property type="entry name" value="RIBOSOMAL PROTEIN L25/GLN-TRNA SYNTHETASE, ANTI-CODON-BINDING DOMAIN-CONTAINING PROTEIN"/>
    <property type="match status" value="1"/>
</dbReference>
<dbReference type="PANTHER" id="PTHR33284:SF1">
    <property type="entry name" value="RIBOSOMAL PROTEIN L25_GLN-TRNA SYNTHETASE, ANTI-CODON-BINDING DOMAIN-CONTAINING PROTEIN"/>
    <property type="match status" value="1"/>
</dbReference>
<dbReference type="Pfam" id="PF01386">
    <property type="entry name" value="Ribosomal_L25p"/>
    <property type="match status" value="1"/>
</dbReference>
<dbReference type="Pfam" id="PF14693">
    <property type="entry name" value="Ribosomal_TL5_C"/>
    <property type="match status" value="1"/>
</dbReference>
<dbReference type="SUPFAM" id="SSF50715">
    <property type="entry name" value="Ribosomal protein L25-like"/>
    <property type="match status" value="1"/>
</dbReference>
<keyword id="KW-0002">3D-structure</keyword>
<keyword id="KW-0687">Ribonucleoprotein</keyword>
<keyword id="KW-0689">Ribosomal protein</keyword>
<keyword id="KW-0694">RNA-binding</keyword>
<keyword id="KW-0699">rRNA-binding</keyword>